<organism>
    <name type="scientific">Danio rerio</name>
    <name type="common">Zebrafish</name>
    <name type="synonym">Brachydanio rerio</name>
    <dbReference type="NCBI Taxonomy" id="7955"/>
    <lineage>
        <taxon>Eukaryota</taxon>
        <taxon>Metazoa</taxon>
        <taxon>Chordata</taxon>
        <taxon>Craniata</taxon>
        <taxon>Vertebrata</taxon>
        <taxon>Euteleostomi</taxon>
        <taxon>Actinopterygii</taxon>
        <taxon>Neopterygii</taxon>
        <taxon>Teleostei</taxon>
        <taxon>Ostariophysi</taxon>
        <taxon>Cypriniformes</taxon>
        <taxon>Danionidae</taxon>
        <taxon>Danioninae</taxon>
        <taxon>Danio</taxon>
    </lineage>
</organism>
<protein>
    <recommendedName>
        <fullName>Zinc finger C4H2 domain-containing protein</fullName>
    </recommendedName>
    <alternativeName>
        <fullName>Hepatocellular carcinoma-associated antigen 127 homolog</fullName>
    </alternativeName>
    <alternativeName>
        <fullName>Hepatocellular carcinoma-associated antigen 127-like</fullName>
    </alternativeName>
</protein>
<sequence length="224" mass="26212">MADEQEIMCKLENIKEIRNKTIQMEKIKSRLRTEFEALESEEKHLREYKQEMDLLLQEKMAHVEELRLIHADINVMENTIKQSESDLNKLLESTRRLHDEYKPLKEHVDALRMTLGLQRLPDLSQEEEKLSLDYFEKQKAEWQTEPQEPPIPESLAAAAAAAQQLQAARKQDARQTATFRQQPPPMKACLSCHQQIHRNAPICPLCKAKSRSRNPKKPKRKPDE</sequence>
<reference key="1">
    <citation type="journal article" date="2004" name="Proc. Natl. Acad. Sci. U.S.A.">
        <title>Identification of 315 genes essential for early zebrafish development.</title>
        <authorList>
            <person name="Amsterdam A."/>
            <person name="Nissen R.M."/>
            <person name="Sun Z."/>
            <person name="Swindell E.C."/>
            <person name="Farrington S."/>
            <person name="Hopkins N."/>
        </authorList>
    </citation>
    <scope>NUCLEOTIDE SEQUENCE [LARGE SCALE MRNA]</scope>
    <source>
        <tissue>Embryo</tissue>
    </source>
</reference>
<reference key="2">
    <citation type="journal article" date="2013" name="Nature">
        <title>The zebrafish reference genome sequence and its relationship to the human genome.</title>
        <authorList>
            <person name="Howe K."/>
            <person name="Clark M.D."/>
            <person name="Torroja C.F."/>
            <person name="Torrance J."/>
            <person name="Berthelot C."/>
            <person name="Muffato M."/>
            <person name="Collins J.E."/>
            <person name="Humphray S."/>
            <person name="McLaren K."/>
            <person name="Matthews L."/>
            <person name="McLaren S."/>
            <person name="Sealy I."/>
            <person name="Caccamo M."/>
            <person name="Churcher C."/>
            <person name="Scott C."/>
            <person name="Barrett J.C."/>
            <person name="Koch R."/>
            <person name="Rauch G.J."/>
            <person name="White S."/>
            <person name="Chow W."/>
            <person name="Kilian B."/>
            <person name="Quintais L.T."/>
            <person name="Guerra-Assuncao J.A."/>
            <person name="Zhou Y."/>
            <person name="Gu Y."/>
            <person name="Yen J."/>
            <person name="Vogel J.H."/>
            <person name="Eyre T."/>
            <person name="Redmond S."/>
            <person name="Banerjee R."/>
            <person name="Chi J."/>
            <person name="Fu B."/>
            <person name="Langley E."/>
            <person name="Maguire S.F."/>
            <person name="Laird G.K."/>
            <person name="Lloyd D."/>
            <person name="Kenyon E."/>
            <person name="Donaldson S."/>
            <person name="Sehra H."/>
            <person name="Almeida-King J."/>
            <person name="Loveland J."/>
            <person name="Trevanion S."/>
            <person name="Jones M."/>
            <person name="Quail M."/>
            <person name="Willey D."/>
            <person name="Hunt A."/>
            <person name="Burton J."/>
            <person name="Sims S."/>
            <person name="McLay K."/>
            <person name="Plumb B."/>
            <person name="Davis J."/>
            <person name="Clee C."/>
            <person name="Oliver K."/>
            <person name="Clark R."/>
            <person name="Riddle C."/>
            <person name="Elliot D."/>
            <person name="Threadgold G."/>
            <person name="Harden G."/>
            <person name="Ware D."/>
            <person name="Begum S."/>
            <person name="Mortimore B."/>
            <person name="Kerry G."/>
            <person name="Heath P."/>
            <person name="Phillimore B."/>
            <person name="Tracey A."/>
            <person name="Corby N."/>
            <person name="Dunn M."/>
            <person name="Johnson C."/>
            <person name="Wood J."/>
            <person name="Clark S."/>
            <person name="Pelan S."/>
            <person name="Griffiths G."/>
            <person name="Smith M."/>
            <person name="Glithero R."/>
            <person name="Howden P."/>
            <person name="Barker N."/>
            <person name="Lloyd C."/>
            <person name="Stevens C."/>
            <person name="Harley J."/>
            <person name="Holt K."/>
            <person name="Panagiotidis G."/>
            <person name="Lovell J."/>
            <person name="Beasley H."/>
            <person name="Henderson C."/>
            <person name="Gordon D."/>
            <person name="Auger K."/>
            <person name="Wright D."/>
            <person name="Collins J."/>
            <person name="Raisen C."/>
            <person name="Dyer L."/>
            <person name="Leung K."/>
            <person name="Robertson L."/>
            <person name="Ambridge K."/>
            <person name="Leongamornlert D."/>
            <person name="McGuire S."/>
            <person name="Gilderthorp R."/>
            <person name="Griffiths C."/>
            <person name="Manthravadi D."/>
            <person name="Nichol S."/>
            <person name="Barker G."/>
            <person name="Whitehead S."/>
            <person name="Kay M."/>
            <person name="Brown J."/>
            <person name="Murnane C."/>
            <person name="Gray E."/>
            <person name="Humphries M."/>
            <person name="Sycamore N."/>
            <person name="Barker D."/>
            <person name="Saunders D."/>
            <person name="Wallis J."/>
            <person name="Babbage A."/>
            <person name="Hammond S."/>
            <person name="Mashreghi-Mohammadi M."/>
            <person name="Barr L."/>
            <person name="Martin S."/>
            <person name="Wray P."/>
            <person name="Ellington A."/>
            <person name="Matthews N."/>
            <person name="Ellwood M."/>
            <person name="Woodmansey R."/>
            <person name="Clark G."/>
            <person name="Cooper J."/>
            <person name="Tromans A."/>
            <person name="Grafham D."/>
            <person name="Skuce C."/>
            <person name="Pandian R."/>
            <person name="Andrews R."/>
            <person name="Harrison E."/>
            <person name="Kimberley A."/>
            <person name="Garnett J."/>
            <person name="Fosker N."/>
            <person name="Hall R."/>
            <person name="Garner P."/>
            <person name="Kelly D."/>
            <person name="Bird C."/>
            <person name="Palmer S."/>
            <person name="Gehring I."/>
            <person name="Berger A."/>
            <person name="Dooley C.M."/>
            <person name="Ersan-Urun Z."/>
            <person name="Eser C."/>
            <person name="Geiger H."/>
            <person name="Geisler M."/>
            <person name="Karotki L."/>
            <person name="Kirn A."/>
            <person name="Konantz J."/>
            <person name="Konantz M."/>
            <person name="Oberlander M."/>
            <person name="Rudolph-Geiger S."/>
            <person name="Teucke M."/>
            <person name="Lanz C."/>
            <person name="Raddatz G."/>
            <person name="Osoegawa K."/>
            <person name="Zhu B."/>
            <person name="Rapp A."/>
            <person name="Widaa S."/>
            <person name="Langford C."/>
            <person name="Yang F."/>
            <person name="Schuster S.C."/>
            <person name="Carter N.P."/>
            <person name="Harrow J."/>
            <person name="Ning Z."/>
            <person name="Herrero J."/>
            <person name="Searle S.M."/>
            <person name="Enright A."/>
            <person name="Geisler R."/>
            <person name="Plasterk R.H."/>
            <person name="Lee C."/>
            <person name="Westerfield M."/>
            <person name="de Jong P.J."/>
            <person name="Zon L.I."/>
            <person name="Postlethwait J.H."/>
            <person name="Nusslein-Volhard C."/>
            <person name="Hubbard T.J."/>
            <person name="Roest Crollius H."/>
            <person name="Rogers J."/>
            <person name="Stemple D.L."/>
        </authorList>
    </citation>
    <scope>NUCLEOTIDE SEQUENCE [LARGE SCALE GENOMIC DNA]</scope>
    <source>
        <strain>Tuebingen</strain>
    </source>
</reference>
<reference key="3">
    <citation type="submission" date="2003-06" db="EMBL/GenBank/DDBJ databases">
        <authorList>
            <consortium name="NIH - Zebrafish Gene Collection (ZGC) project"/>
        </authorList>
    </citation>
    <scope>NUCLEOTIDE SEQUENCE [LARGE SCALE MRNA]</scope>
    <source>
        <tissue>Embryo</tissue>
    </source>
</reference>
<reference key="4">
    <citation type="journal article" date="2013" name="Am. J. Hum. Genet.">
        <title>ZC4H2 mutations are associated with arthrogryposis multiplex congenita and intellectual disability through impairment of central and peripheral synaptic plasticity.</title>
        <authorList>
            <person name="Hirata H."/>
            <person name="Nanda I."/>
            <person name="van Riesen A."/>
            <person name="McMichael G."/>
            <person name="Hu H."/>
            <person name="Hambrock M."/>
            <person name="Papon M.A."/>
            <person name="Fischer U."/>
            <person name="Marouillat S."/>
            <person name="Ding C."/>
            <person name="Alirol S."/>
            <person name="Bienek M."/>
            <person name="Preisler-Adams S."/>
            <person name="Grimme A."/>
            <person name="Seelow D."/>
            <person name="Webster R."/>
            <person name="Haan E."/>
            <person name="Maclennan A."/>
            <person name="Stenzel W."/>
            <person name="Yap T.Y."/>
            <person name="Gardner A."/>
            <person name="Nguyen L.S."/>
            <person name="Shaw M."/>
            <person name="Lebrun N."/>
            <person name="Haas S.A."/>
            <person name="Kress W."/>
            <person name="Haaf T."/>
            <person name="Schellenberger E."/>
            <person name="Chelly J."/>
            <person name="Viot G."/>
            <person name="Shaffer L.G."/>
            <person name="Rosenfeld J.A."/>
            <person name="Kramer N."/>
            <person name="Falk R."/>
            <person name="El-Khechen D."/>
            <person name="Escobar L.F."/>
            <person name="Hennekam R."/>
            <person name="Wieacker P."/>
            <person name="Hubner C."/>
            <person name="Ropers H.H."/>
            <person name="Gecz J."/>
            <person name="Schuelke M."/>
            <person name="Laumonnier F."/>
            <person name="Kalscheuer V.M."/>
        </authorList>
    </citation>
    <scope>FUNCTION</scope>
</reference>
<reference key="5">
    <citation type="journal article" date="2015" name="Hum. Mol. Genet.">
        <title>ZC4H2, an XLID gene, is required for the generation of a specific subset of CNS interneurons.</title>
        <authorList>
            <person name="May M."/>
            <person name="Hwang K.S."/>
            <person name="Miles J."/>
            <person name="Williams C."/>
            <person name="Niranjan T."/>
            <person name="Kahler S.G."/>
            <person name="Chiurazzi P."/>
            <person name="Steindl K."/>
            <person name="Van Der Spek P.J."/>
            <person name="Swagemakers S."/>
            <person name="Mueller J."/>
            <person name="Stefl S."/>
            <person name="Alexov E."/>
            <person name="Ryu J.I."/>
            <person name="Choi J.H."/>
            <person name="Kim H.T."/>
            <person name="Tarpey P."/>
            <person name="Neri G."/>
            <person name="Holloway L."/>
            <person name="Skinner C."/>
            <person name="Stevenson R.E."/>
            <person name="Dorsky R.I."/>
            <person name="Wang T."/>
            <person name="Schwartz C.E."/>
            <person name="Kim C.H."/>
        </authorList>
    </citation>
    <scope>FUNCTION</scope>
    <scope>SUBCELLULAR LOCATION</scope>
    <scope>DEVELOPMENTAL STAGE</scope>
    <scope>DISRUPTION PHENOTYPE</scope>
</reference>
<dbReference type="EMBL" id="AY648796">
    <property type="protein sequence ID" value="AAT68114.1"/>
    <property type="molecule type" value="mRNA"/>
</dbReference>
<dbReference type="EMBL" id="CR812469">
    <property type="status" value="NOT_ANNOTATED_CDS"/>
    <property type="molecule type" value="Genomic_DNA"/>
</dbReference>
<dbReference type="EMBL" id="BC053110">
    <property type="protein sequence ID" value="AAH53110.1"/>
    <property type="molecule type" value="mRNA"/>
</dbReference>
<dbReference type="RefSeq" id="NP_955936.1">
    <property type="nucleotide sequence ID" value="NM_199642.1"/>
</dbReference>
<dbReference type="SMR" id="Q7T3I0"/>
<dbReference type="FunCoup" id="Q7T3I0">
    <property type="interactions" value="904"/>
</dbReference>
<dbReference type="STRING" id="7955.ENSDARP00000010952"/>
<dbReference type="PaxDb" id="7955-ENSDARP00000010952"/>
<dbReference type="Ensembl" id="ENSDART00000020908">
    <property type="protein sequence ID" value="ENSDARP00000010952"/>
    <property type="gene ID" value="ENSDARG00000015314"/>
</dbReference>
<dbReference type="Ensembl" id="ENSDART00000185576">
    <property type="protein sequence ID" value="ENSDARP00000156257"/>
    <property type="gene ID" value="ENSDARG00000112180"/>
</dbReference>
<dbReference type="GeneID" id="323487"/>
<dbReference type="KEGG" id="dre:323487"/>
<dbReference type="AGR" id="ZFIN:ZDB-GENE-030131-2207"/>
<dbReference type="CTD" id="55906"/>
<dbReference type="ZFIN" id="ZDB-GENE-030131-2207">
    <property type="gene designation" value="zc4h2"/>
</dbReference>
<dbReference type="eggNOG" id="KOG4451">
    <property type="taxonomic scope" value="Eukaryota"/>
</dbReference>
<dbReference type="HOGENOM" id="CLU_067420_0_0_1"/>
<dbReference type="InParanoid" id="Q7T3I0"/>
<dbReference type="OMA" id="NAPTCPM"/>
<dbReference type="OrthoDB" id="20865at2759"/>
<dbReference type="PhylomeDB" id="Q7T3I0"/>
<dbReference type="TreeFam" id="TF315275"/>
<dbReference type="PRO" id="PR:Q7T3I0"/>
<dbReference type="Proteomes" id="UP000000437">
    <property type="component" value="Alternate scaffold 5"/>
</dbReference>
<dbReference type="Proteomes" id="UP000000437">
    <property type="component" value="Chromosome 5"/>
</dbReference>
<dbReference type="Bgee" id="ENSDARG00000015314">
    <property type="expression patterns" value="Expressed in cleaving embryo and 28 other cell types or tissues"/>
</dbReference>
<dbReference type="GO" id="GO:0005737">
    <property type="term" value="C:cytoplasm"/>
    <property type="evidence" value="ECO:0000250"/>
    <property type="project" value="UniProtKB"/>
</dbReference>
<dbReference type="GO" id="GO:0005634">
    <property type="term" value="C:nucleus"/>
    <property type="evidence" value="ECO:0000314"/>
    <property type="project" value="UniProtKB"/>
</dbReference>
<dbReference type="GO" id="GO:0045211">
    <property type="term" value="C:postsynaptic membrane"/>
    <property type="evidence" value="ECO:0000250"/>
    <property type="project" value="UniProtKB"/>
</dbReference>
<dbReference type="GO" id="GO:0008270">
    <property type="term" value="F:zinc ion binding"/>
    <property type="evidence" value="ECO:0007669"/>
    <property type="project" value="UniProtKB-KW"/>
</dbReference>
<dbReference type="GO" id="GO:0007399">
    <property type="term" value="P:nervous system development"/>
    <property type="evidence" value="ECO:0000315"/>
    <property type="project" value="UniProtKB"/>
</dbReference>
<dbReference type="GO" id="GO:0007528">
    <property type="term" value="P:neuromuscular junction development"/>
    <property type="evidence" value="ECO:0000315"/>
    <property type="project" value="UniProtKB"/>
</dbReference>
<dbReference type="GO" id="GO:0050885">
    <property type="term" value="P:neuromuscular process controlling balance"/>
    <property type="evidence" value="ECO:0000315"/>
    <property type="project" value="ZFIN"/>
</dbReference>
<dbReference type="GO" id="GO:0048666">
    <property type="term" value="P:neuron development"/>
    <property type="evidence" value="ECO:0000315"/>
    <property type="project" value="ZFIN"/>
</dbReference>
<dbReference type="GO" id="GO:0048665">
    <property type="term" value="P:neuron fate specification"/>
    <property type="evidence" value="ECO:0000315"/>
    <property type="project" value="ZFIN"/>
</dbReference>
<dbReference type="GO" id="GO:0045666">
    <property type="term" value="P:positive regulation of neuron differentiation"/>
    <property type="evidence" value="ECO:0000315"/>
    <property type="project" value="UniProtKB"/>
</dbReference>
<dbReference type="GO" id="GO:0021522">
    <property type="term" value="P:spinal cord motor neuron differentiation"/>
    <property type="evidence" value="ECO:0000315"/>
    <property type="project" value="UniProtKB"/>
</dbReference>
<dbReference type="GO" id="GO:0036269">
    <property type="term" value="P:swimming behavior"/>
    <property type="evidence" value="ECO:0000315"/>
    <property type="project" value="ZFIN"/>
</dbReference>
<dbReference type="InterPro" id="IPR044069">
    <property type="entry name" value="ZF_C4H2"/>
</dbReference>
<dbReference type="InterPro" id="IPR018482">
    <property type="entry name" value="Znf-C4H2"/>
</dbReference>
<dbReference type="PANTHER" id="PTHR31058">
    <property type="entry name" value="ZINC FINGER C4H2 DOMAIN-CONTAINING PROTEIN"/>
    <property type="match status" value="1"/>
</dbReference>
<dbReference type="PANTHER" id="PTHR31058:SF2">
    <property type="entry name" value="ZINC FINGER C4H2 DOMAIN-CONTAINING PROTEIN"/>
    <property type="match status" value="1"/>
</dbReference>
<dbReference type="Pfam" id="PF10146">
    <property type="entry name" value="zf-C4H2"/>
    <property type="match status" value="1"/>
</dbReference>
<dbReference type="PROSITE" id="PS51896">
    <property type="entry name" value="ZF_C4H2"/>
    <property type="match status" value="1"/>
</dbReference>
<comment type="function">
    <text evidence="5">Plays a role in GABAergic and V2 interneurons differentiation (PubMed:26056227). Involved in motoneuron development and in neuromuscular junction formation (PubMed:23623388).</text>
</comment>
<comment type="subcellular location">
    <subcellularLocation>
        <location evidence="6">Nucleus</location>
    </subcellularLocation>
    <subcellularLocation>
        <location evidence="1">Cytoplasm</location>
    </subcellularLocation>
    <subcellularLocation>
        <location evidence="1">Postsynaptic cell membrane</location>
    </subcellularLocation>
</comment>
<comment type="developmental stage">
    <text evidence="6">Expressed throughout the developing central nervous system, but excluded from the most medial ventricular zone (PubMed:26056227).</text>
</comment>
<comment type="disruption phenotype">
    <text evidence="6">Larva with TALEN-induced zc4h2 null mutations show abnormally pectoral flexed fins, outward positioning of eyes, continuous swimming movements and balance problems at 5 days post-fertilization (dpf) (PubMed:26056227). Also exhibited an open mouth as well as continuous jaw movements (PubMed:26056227). Display a reduction in the number of V2 interneuron precursors in the hindbrain and spinal cord at 24 hours post-fertilization (hpf). Display a reduction in the number of GABAergic interneurons in the midbrain tegmentum at 35 hpf (PubMed:26056227).</text>
</comment>
<feature type="chain" id="PRO_0000423169" description="Zinc finger C4H2 domain-containing protein">
    <location>
        <begin position="1"/>
        <end position="224"/>
    </location>
</feature>
<feature type="zinc finger region" description="C4H2-type" evidence="3">
    <location>
        <begin position="189"/>
        <end position="206"/>
    </location>
</feature>
<feature type="region of interest" description="Disordered" evidence="4">
    <location>
        <begin position="166"/>
        <end position="185"/>
    </location>
</feature>
<feature type="region of interest" description="Disordered" evidence="4">
    <location>
        <begin position="204"/>
        <end position="224"/>
    </location>
</feature>
<feature type="coiled-coil region" evidence="2">
    <location>
        <begin position="12"/>
        <end position="97"/>
    </location>
</feature>
<feature type="compositionally biased region" description="Basic residues" evidence="4">
    <location>
        <begin position="208"/>
        <end position="224"/>
    </location>
</feature>
<proteinExistence type="evidence at transcript level"/>
<accession>Q7T3I0</accession>
<keyword id="KW-1003">Cell membrane</keyword>
<keyword id="KW-0175">Coiled coil</keyword>
<keyword id="KW-0963">Cytoplasm</keyword>
<keyword id="KW-0217">Developmental protein</keyword>
<keyword id="KW-0221">Differentiation</keyword>
<keyword id="KW-0472">Membrane</keyword>
<keyword id="KW-0479">Metal-binding</keyword>
<keyword id="KW-0539">Nucleus</keyword>
<keyword id="KW-0628">Postsynaptic cell membrane</keyword>
<keyword id="KW-1185">Reference proteome</keyword>
<keyword id="KW-0770">Synapse</keyword>
<keyword id="KW-0862">Zinc</keyword>
<keyword id="KW-0863">Zinc-finger</keyword>
<gene>
    <name type="primary">zc4h2</name>
</gene>
<name>ZC4H2_DANRE</name>
<evidence type="ECO:0000250" key="1">
    <source>
        <dbReference type="UniProtKB" id="Q9NQZ6"/>
    </source>
</evidence>
<evidence type="ECO:0000255" key="2"/>
<evidence type="ECO:0000255" key="3">
    <source>
        <dbReference type="PROSITE-ProRule" id="PRU01244"/>
    </source>
</evidence>
<evidence type="ECO:0000256" key="4">
    <source>
        <dbReference type="SAM" id="MobiDB-lite"/>
    </source>
</evidence>
<evidence type="ECO:0000269" key="5">
    <source>
    </source>
</evidence>
<evidence type="ECO:0000269" key="6">
    <source>
    </source>
</evidence>